<accession>A7X5Y6</accession>
<sequence length="457" mass="52386">MFKTLYARIAIYSITVILFSALISFVLTNVYYHYNLKASNDAKIMKTLKEARQYEQSAKPTHIQQYFKHLGQMNYQIMTVDQKGHKTFYGEPFREDTLSQNAINNVLNNKDYHGIKDKPFALFVTGFFDNVTDNTVGINFKTKDGSIAVFMRPDIGETFSEFRTFLAVLLMLLLFISISLVIASTYSIIRPVKKLKLATERLIDGDFETPIKQTRKDEIGTLQYHFNKMRESLGQVDQMRQHFVQNVSHEIKTPLTHIHHLLSELQQTSDKTLRQQYINDIYTITTQLSGLTTELLLLSELDNHQHLLFDDKIQVDQLIKDIIRHEQFAADEKSLIILADLESINFLGNQRLLHQALSNLLINAIKYTDVGGAIDIALQHSHNNIIFTISNDGSPISPQAEARLFERFYKVSKHDNSNGLGLAITKSIIELHHGTIQFTQSNEYVTTFTITLPNNSH</sequence>
<protein>
    <recommendedName>
        <fullName>Heme sensor protein HssS</fullName>
        <ecNumber>2.7.13.3</ecNumber>
    </recommendedName>
</protein>
<proteinExistence type="inferred from homology"/>
<dbReference type="EC" id="2.7.13.3"/>
<dbReference type="EMBL" id="AP009324">
    <property type="protein sequence ID" value="BAF79229.1"/>
    <property type="molecule type" value="Genomic_DNA"/>
</dbReference>
<dbReference type="RefSeq" id="WP_000477338.1">
    <property type="nucleotide sequence ID" value="NC_009782.1"/>
</dbReference>
<dbReference type="SMR" id="A7X5Y6"/>
<dbReference type="KEGG" id="saw:SAHV_2346"/>
<dbReference type="HOGENOM" id="CLU_000445_89_6_9"/>
<dbReference type="GO" id="GO:0005886">
    <property type="term" value="C:plasma membrane"/>
    <property type="evidence" value="ECO:0007669"/>
    <property type="project" value="UniProtKB-SubCell"/>
</dbReference>
<dbReference type="GO" id="GO:0005524">
    <property type="term" value="F:ATP binding"/>
    <property type="evidence" value="ECO:0007669"/>
    <property type="project" value="UniProtKB-KW"/>
</dbReference>
<dbReference type="GO" id="GO:0000155">
    <property type="term" value="F:phosphorelay sensor kinase activity"/>
    <property type="evidence" value="ECO:0007669"/>
    <property type="project" value="InterPro"/>
</dbReference>
<dbReference type="CDD" id="cd06225">
    <property type="entry name" value="HAMP"/>
    <property type="match status" value="1"/>
</dbReference>
<dbReference type="CDD" id="cd00082">
    <property type="entry name" value="HisKA"/>
    <property type="match status" value="1"/>
</dbReference>
<dbReference type="FunFam" id="3.30.565.10:FF:000090">
    <property type="entry name" value="Heme sensor histidine kinase HssS"/>
    <property type="match status" value="1"/>
</dbReference>
<dbReference type="Gene3D" id="1.10.287.130">
    <property type="match status" value="1"/>
</dbReference>
<dbReference type="Gene3D" id="6.10.340.10">
    <property type="match status" value="1"/>
</dbReference>
<dbReference type="Gene3D" id="3.30.565.10">
    <property type="entry name" value="Histidine kinase-like ATPase, C-terminal domain"/>
    <property type="match status" value="1"/>
</dbReference>
<dbReference type="InterPro" id="IPR050398">
    <property type="entry name" value="Bact_Sensor_His_Kinase"/>
</dbReference>
<dbReference type="InterPro" id="IPR003660">
    <property type="entry name" value="HAMP_dom"/>
</dbReference>
<dbReference type="InterPro" id="IPR036890">
    <property type="entry name" value="HATPase_C_sf"/>
</dbReference>
<dbReference type="InterPro" id="IPR005467">
    <property type="entry name" value="His_kinase_dom"/>
</dbReference>
<dbReference type="InterPro" id="IPR003661">
    <property type="entry name" value="HisK_dim/P_dom"/>
</dbReference>
<dbReference type="InterPro" id="IPR036097">
    <property type="entry name" value="HisK_dim/P_sf"/>
</dbReference>
<dbReference type="InterPro" id="IPR004358">
    <property type="entry name" value="Sig_transdc_His_kin-like_C"/>
</dbReference>
<dbReference type="PANTHER" id="PTHR45528:SF11">
    <property type="entry name" value="HISTIDINE KINASE"/>
    <property type="match status" value="1"/>
</dbReference>
<dbReference type="PANTHER" id="PTHR45528">
    <property type="entry name" value="SENSOR HISTIDINE KINASE CPXA"/>
    <property type="match status" value="1"/>
</dbReference>
<dbReference type="Pfam" id="PF00672">
    <property type="entry name" value="HAMP"/>
    <property type="match status" value="1"/>
</dbReference>
<dbReference type="Pfam" id="PF02518">
    <property type="entry name" value="HATPase_c"/>
    <property type="match status" value="1"/>
</dbReference>
<dbReference type="Pfam" id="PF00512">
    <property type="entry name" value="HisKA"/>
    <property type="match status" value="1"/>
</dbReference>
<dbReference type="PRINTS" id="PR00344">
    <property type="entry name" value="BCTRLSENSOR"/>
</dbReference>
<dbReference type="SMART" id="SM00304">
    <property type="entry name" value="HAMP"/>
    <property type="match status" value="1"/>
</dbReference>
<dbReference type="SMART" id="SM00387">
    <property type="entry name" value="HATPase_c"/>
    <property type="match status" value="1"/>
</dbReference>
<dbReference type="SMART" id="SM00388">
    <property type="entry name" value="HisKA"/>
    <property type="match status" value="1"/>
</dbReference>
<dbReference type="SUPFAM" id="SSF55874">
    <property type="entry name" value="ATPase domain of HSP90 chaperone/DNA topoisomerase II/histidine kinase"/>
    <property type="match status" value="1"/>
</dbReference>
<dbReference type="SUPFAM" id="SSF158472">
    <property type="entry name" value="HAMP domain-like"/>
    <property type="match status" value="1"/>
</dbReference>
<dbReference type="SUPFAM" id="SSF47384">
    <property type="entry name" value="Homodimeric domain of signal transducing histidine kinase"/>
    <property type="match status" value="1"/>
</dbReference>
<dbReference type="PROSITE" id="PS50885">
    <property type="entry name" value="HAMP"/>
    <property type="match status" value="1"/>
</dbReference>
<dbReference type="PROSITE" id="PS50109">
    <property type="entry name" value="HIS_KIN"/>
    <property type="match status" value="1"/>
</dbReference>
<gene>
    <name type="primary">hssS</name>
    <name type="ordered locus">SAHV_2346</name>
</gene>
<keyword id="KW-0067">ATP-binding</keyword>
<keyword id="KW-1003">Cell membrane</keyword>
<keyword id="KW-0418">Kinase</keyword>
<keyword id="KW-0472">Membrane</keyword>
<keyword id="KW-0547">Nucleotide-binding</keyword>
<keyword id="KW-0597">Phosphoprotein</keyword>
<keyword id="KW-0808">Transferase</keyword>
<keyword id="KW-0812">Transmembrane</keyword>
<keyword id="KW-1133">Transmembrane helix</keyword>
<keyword id="KW-0902">Two-component regulatory system</keyword>
<keyword id="KW-0843">Virulence</keyword>
<comment type="function">
    <text evidence="1">Member of the two-component regulatory system HssS/HssR involved in intracellular heme homeostasis and tempering of staphylococcal virulence. HssS functions as a heme sensor histidine kinase which is autophosphorylated at a histidine residue and transfers its phosphate group to an aspartate residue of HssR. HssR/HssS activates the expression of hrtAB, an efflux pump, in response to extracellular heme, hemin, hemoglobin or blood (By similarity).</text>
</comment>
<comment type="catalytic activity">
    <reaction>
        <text>ATP + protein L-histidine = ADP + protein N-phospho-L-histidine.</text>
        <dbReference type="EC" id="2.7.13.3"/>
    </reaction>
</comment>
<comment type="subcellular location">
    <subcellularLocation>
        <location evidence="1">Cell membrane</location>
        <topology evidence="1">Multi-pass membrane protein</topology>
    </subcellularLocation>
</comment>
<comment type="PTM">
    <text evidence="1">Autophosphorylated.</text>
</comment>
<evidence type="ECO:0000250" key="1"/>
<evidence type="ECO:0000255" key="2"/>
<evidence type="ECO:0000255" key="3">
    <source>
        <dbReference type="PROSITE-ProRule" id="PRU00102"/>
    </source>
</evidence>
<evidence type="ECO:0000255" key="4">
    <source>
        <dbReference type="PROSITE-ProRule" id="PRU00107"/>
    </source>
</evidence>
<name>HSSS_STAA1</name>
<organism>
    <name type="scientific">Staphylococcus aureus (strain Mu3 / ATCC 700698)</name>
    <dbReference type="NCBI Taxonomy" id="418127"/>
    <lineage>
        <taxon>Bacteria</taxon>
        <taxon>Bacillati</taxon>
        <taxon>Bacillota</taxon>
        <taxon>Bacilli</taxon>
        <taxon>Bacillales</taxon>
        <taxon>Staphylococcaceae</taxon>
        <taxon>Staphylococcus</taxon>
    </lineage>
</organism>
<reference key="1">
    <citation type="journal article" date="2008" name="Antimicrob. Agents Chemother.">
        <title>Mutated response regulator graR is responsible for phenotypic conversion of Staphylococcus aureus from heterogeneous vancomycin-intermediate resistance to vancomycin-intermediate resistance.</title>
        <authorList>
            <person name="Neoh H.-M."/>
            <person name="Cui L."/>
            <person name="Yuzawa H."/>
            <person name="Takeuchi F."/>
            <person name="Matsuo M."/>
            <person name="Hiramatsu K."/>
        </authorList>
    </citation>
    <scope>NUCLEOTIDE SEQUENCE [LARGE SCALE GENOMIC DNA]</scope>
    <source>
        <strain>Mu3 / ATCC 700698</strain>
    </source>
</reference>
<feature type="chain" id="PRO_0000331343" description="Heme sensor protein HssS">
    <location>
        <begin position="1"/>
        <end position="457"/>
    </location>
</feature>
<feature type="transmembrane region" description="Helical" evidence="2">
    <location>
        <begin position="9"/>
        <end position="29"/>
    </location>
</feature>
<feature type="transmembrane region" description="Helical" evidence="2">
    <location>
        <begin position="164"/>
        <end position="184"/>
    </location>
</feature>
<feature type="domain" description="HAMP" evidence="3">
    <location>
        <begin position="186"/>
        <end position="238"/>
    </location>
</feature>
<feature type="domain" description="Histidine kinase" evidence="4">
    <location>
        <begin position="246"/>
        <end position="456"/>
    </location>
</feature>
<feature type="modified residue" description="Phosphohistidine; by autocatalysis" evidence="4">
    <location>
        <position position="249"/>
    </location>
</feature>